<comment type="function">
    <text evidence="1">Transfers mannose from GDP-mannose to dolichol monophosphate to form dolichol phosphate mannose (Dol-P-Man) which is the mannosyl donor in pathways leading to N-glycosylation, glycosyl phosphatidylinositol membrane anchoring, and O-mannosylation of proteins; catalytic subunit of the dolichol-phosphate mannose (DPM) synthase complex.</text>
</comment>
<comment type="catalytic activity">
    <reaction evidence="1">
        <text>a di-trans,poly-cis-dolichyl phosphate + GDP-alpha-D-mannose = a di-trans,poly-cis-dolichyl beta-D-mannosyl phosphate + GDP</text>
        <dbReference type="Rhea" id="RHEA:21184"/>
        <dbReference type="Rhea" id="RHEA-COMP:19498"/>
        <dbReference type="Rhea" id="RHEA-COMP:19501"/>
        <dbReference type="ChEBI" id="CHEBI:57527"/>
        <dbReference type="ChEBI" id="CHEBI:57683"/>
        <dbReference type="ChEBI" id="CHEBI:58189"/>
        <dbReference type="ChEBI" id="CHEBI:58211"/>
        <dbReference type="EC" id="2.4.1.83"/>
    </reaction>
</comment>
<comment type="cofactor">
    <cofactor evidence="2">
        <name>Mg(2+)</name>
        <dbReference type="ChEBI" id="CHEBI:18420"/>
    </cofactor>
    <cofactor evidence="2">
        <name>Mn(2+)</name>
        <dbReference type="ChEBI" id="CHEBI:29035"/>
    </cofactor>
    <cofactor evidence="2">
        <name>Ca(2+)</name>
        <dbReference type="ChEBI" id="CHEBI:29108"/>
    </cofactor>
    <text evidence="2">Binds 1 divalent metal cation.</text>
</comment>
<comment type="pathway">
    <text evidence="1">Protein modification; protein glycosylation.</text>
</comment>
<comment type="subunit">
    <text evidence="1">Component of the dolichol-phosphate mannose (DPM) synthase complex composed of dpm1, dpm2 and dpm3.</text>
</comment>
<comment type="subcellular location">
    <subcellularLocation>
        <location evidence="1">Endoplasmic reticulum</location>
    </subcellularLocation>
</comment>
<comment type="similarity">
    <text evidence="3">Belongs to the glycosyltransferase 2 family.</text>
</comment>
<organism>
    <name type="scientific">Dictyostelium discoideum</name>
    <name type="common">Social amoeba</name>
    <dbReference type="NCBI Taxonomy" id="44689"/>
    <lineage>
        <taxon>Eukaryota</taxon>
        <taxon>Amoebozoa</taxon>
        <taxon>Evosea</taxon>
        <taxon>Eumycetozoa</taxon>
        <taxon>Dictyostelia</taxon>
        <taxon>Dictyosteliales</taxon>
        <taxon>Dictyosteliaceae</taxon>
        <taxon>Dictyostelium</taxon>
    </lineage>
</organism>
<name>DPM1_DICDI</name>
<dbReference type="EC" id="2.4.1.83"/>
<dbReference type="EMBL" id="AAFI02000087">
    <property type="protein sequence ID" value="EAL64186.1"/>
    <property type="molecule type" value="Genomic_DNA"/>
</dbReference>
<dbReference type="RefSeq" id="XP_637689.1">
    <property type="nucleotide sequence ID" value="XM_632597.1"/>
</dbReference>
<dbReference type="SMR" id="Q54LP3"/>
<dbReference type="FunCoup" id="Q54LP3">
    <property type="interactions" value="736"/>
</dbReference>
<dbReference type="STRING" id="44689.Q54LP3"/>
<dbReference type="PaxDb" id="44689-DDB0231708"/>
<dbReference type="EnsemblProtists" id="EAL64186">
    <property type="protein sequence ID" value="EAL64186"/>
    <property type="gene ID" value="DDB_G0286519"/>
</dbReference>
<dbReference type="GeneID" id="8625655"/>
<dbReference type="KEGG" id="ddi:DDB_G0286519"/>
<dbReference type="dictyBase" id="DDB_G0286519">
    <property type="gene designation" value="dgtB"/>
</dbReference>
<dbReference type="VEuPathDB" id="AmoebaDB:DDB_G0286519"/>
<dbReference type="eggNOG" id="KOG2978">
    <property type="taxonomic scope" value="Eukaryota"/>
</dbReference>
<dbReference type="HOGENOM" id="CLU_033536_13_3_1"/>
<dbReference type="InParanoid" id="Q54LP3"/>
<dbReference type="OMA" id="KCFRREV"/>
<dbReference type="PhylomeDB" id="Q54LP3"/>
<dbReference type="UniPathway" id="UPA00378"/>
<dbReference type="PRO" id="PR:Q54LP3"/>
<dbReference type="Proteomes" id="UP000002195">
    <property type="component" value="Chromosome 4"/>
</dbReference>
<dbReference type="GO" id="GO:0005783">
    <property type="term" value="C:endoplasmic reticulum"/>
    <property type="evidence" value="ECO:0000250"/>
    <property type="project" value="dictyBase"/>
</dbReference>
<dbReference type="GO" id="GO:0005789">
    <property type="term" value="C:endoplasmic reticulum membrane"/>
    <property type="evidence" value="ECO:0000250"/>
    <property type="project" value="UniProtKB"/>
</dbReference>
<dbReference type="GO" id="GO:0004582">
    <property type="term" value="F:dolichyl-phosphate beta-D-mannosyltransferase activity"/>
    <property type="evidence" value="ECO:0000250"/>
    <property type="project" value="UniProtKB"/>
</dbReference>
<dbReference type="GO" id="GO:0004169">
    <property type="term" value="F:dolichyl-phosphate-mannose-protein mannosyltransferase activity"/>
    <property type="evidence" value="ECO:0000250"/>
    <property type="project" value="UniProtKB"/>
</dbReference>
<dbReference type="GO" id="GO:0046872">
    <property type="term" value="F:metal ion binding"/>
    <property type="evidence" value="ECO:0000250"/>
    <property type="project" value="UniProtKB"/>
</dbReference>
<dbReference type="GO" id="GO:0180047">
    <property type="term" value="P:dolichol phosphate mannose biosynthetic process"/>
    <property type="evidence" value="ECO:0000250"/>
    <property type="project" value="UniProtKB"/>
</dbReference>
<dbReference type="GO" id="GO:0006488">
    <property type="term" value="P:dolichol-linked oligosaccharide biosynthetic process"/>
    <property type="evidence" value="ECO:0000318"/>
    <property type="project" value="GO_Central"/>
</dbReference>
<dbReference type="GO" id="GO:0006506">
    <property type="term" value="P:GPI anchor biosynthetic process"/>
    <property type="evidence" value="ECO:0000250"/>
    <property type="project" value="UniProtKB"/>
</dbReference>
<dbReference type="GO" id="GO:0035268">
    <property type="term" value="P:protein mannosylation"/>
    <property type="evidence" value="ECO:0000250"/>
    <property type="project" value="UniProtKB"/>
</dbReference>
<dbReference type="GO" id="GO:0035269">
    <property type="term" value="P:protein O-linked mannosylation"/>
    <property type="evidence" value="ECO:0000250"/>
    <property type="project" value="UniProtKB"/>
</dbReference>
<dbReference type="CDD" id="cd06442">
    <property type="entry name" value="DPM1_like"/>
    <property type="match status" value="1"/>
</dbReference>
<dbReference type="FunFam" id="3.90.550.10:FF:000036">
    <property type="entry name" value="Dolichol-phosphate mannosyltransferase subunit 1"/>
    <property type="match status" value="1"/>
</dbReference>
<dbReference type="Gene3D" id="3.90.550.10">
    <property type="entry name" value="Spore Coat Polysaccharide Biosynthesis Protein SpsA, Chain A"/>
    <property type="match status" value="1"/>
</dbReference>
<dbReference type="InterPro" id="IPR039528">
    <property type="entry name" value="DPM1-like"/>
</dbReference>
<dbReference type="InterPro" id="IPR001173">
    <property type="entry name" value="Glyco_trans_2-like"/>
</dbReference>
<dbReference type="InterPro" id="IPR029044">
    <property type="entry name" value="Nucleotide-diphossugar_trans"/>
</dbReference>
<dbReference type="PANTHER" id="PTHR43398">
    <property type="entry name" value="DOLICHOL-PHOSPHATE MANNOSYLTRANSFERASE SUBUNIT 1"/>
    <property type="match status" value="1"/>
</dbReference>
<dbReference type="PANTHER" id="PTHR43398:SF1">
    <property type="entry name" value="DOLICHOL-PHOSPHATE MANNOSYLTRANSFERASE SUBUNIT 1"/>
    <property type="match status" value="1"/>
</dbReference>
<dbReference type="Pfam" id="PF00535">
    <property type="entry name" value="Glycos_transf_2"/>
    <property type="match status" value="1"/>
</dbReference>
<dbReference type="SUPFAM" id="SSF53448">
    <property type="entry name" value="Nucleotide-diphospho-sugar transferases"/>
    <property type="match status" value="1"/>
</dbReference>
<sequence length="254" mass="28698">MSTKNRSDKSSSSSITKDKYTIILPTYKERENLPIIIWLISTELEKCFIDYEVVIVEDNSPDGTLEVAQQLQKIYGEEKIKILSRPGKMGLGSAYMDGIKKSTGNWVILMDADLSHHPKFIPQFIEKQKKLNCEIVTGTRYQSGGGVFGWNLYRKLTSRVANYIASVLLTPGVSDLTGSFRLYRKDVLEKLITQNKSKGYVFQVEMMVRANQLGYQVGEVPITFVDRIFGVSNLDSGEIVGFLKSVLNLFMNIE</sequence>
<feature type="chain" id="PRO_0000327894" description="Dolichol-phosphate mannosyltransferase subunit 1">
    <location>
        <begin position="1"/>
        <end position="254"/>
    </location>
</feature>
<feature type="binding site" evidence="2">
    <location>
        <position position="25"/>
    </location>
    <ligand>
        <name>GDP-alpha-D-mannose</name>
        <dbReference type="ChEBI" id="CHEBI:57527"/>
    </ligand>
</feature>
<feature type="binding site" evidence="2">
    <location>
        <position position="27"/>
    </location>
    <ligand>
        <name>GDP-alpha-D-mannose</name>
        <dbReference type="ChEBI" id="CHEBI:57527"/>
    </ligand>
</feature>
<feature type="binding site" evidence="2">
    <location>
        <position position="29"/>
    </location>
    <ligand>
        <name>GDP-alpha-D-mannose</name>
        <dbReference type="ChEBI" id="CHEBI:57527"/>
    </ligand>
</feature>
<feature type="binding site" evidence="2">
    <location>
        <position position="56"/>
    </location>
    <ligand>
        <name>GDP-alpha-D-mannose</name>
        <dbReference type="ChEBI" id="CHEBI:57527"/>
    </ligand>
</feature>
<feature type="binding site" evidence="2">
    <location>
        <position position="58"/>
    </location>
    <ligand>
        <name>GDP-alpha-D-mannose</name>
        <dbReference type="ChEBI" id="CHEBI:57527"/>
    </ligand>
</feature>
<feature type="binding site" evidence="2">
    <location>
        <position position="111"/>
    </location>
    <ligand>
        <name>GDP-alpha-D-mannose</name>
        <dbReference type="ChEBI" id="CHEBI:57527"/>
    </ligand>
</feature>
<feature type="binding site" evidence="2">
    <location>
        <position position="112"/>
    </location>
    <ligand>
        <name>GDP-alpha-D-mannose</name>
        <dbReference type="ChEBI" id="CHEBI:57527"/>
    </ligand>
</feature>
<feature type="binding site" evidence="2">
    <location>
        <position position="113"/>
    </location>
    <ligand>
        <name>GDP-alpha-D-mannose</name>
        <dbReference type="ChEBI" id="CHEBI:57527"/>
    </ligand>
</feature>
<feature type="binding site" evidence="2">
    <location>
        <position position="113"/>
    </location>
    <ligand>
        <name>Mg(2+)</name>
        <dbReference type="ChEBI" id="CHEBI:18420"/>
    </ligand>
</feature>
<feature type="binding site" evidence="2">
    <location>
        <position position="113"/>
    </location>
    <ligand>
        <name>Mn(2+)</name>
        <dbReference type="ChEBI" id="CHEBI:29035"/>
    </ligand>
</feature>
<feature type="binding site" evidence="2">
    <location>
        <position position="140"/>
    </location>
    <ligand>
        <name>GDP-alpha-D-mannose</name>
        <dbReference type="ChEBI" id="CHEBI:57527"/>
    </ligand>
</feature>
<feature type="binding site" evidence="2">
    <location>
        <position position="227"/>
    </location>
    <ligand>
        <name>GDP-alpha-D-mannose</name>
        <dbReference type="ChEBI" id="CHEBI:57527"/>
    </ligand>
</feature>
<protein>
    <recommendedName>
        <fullName>Dolichol-phosphate mannosyltransferase subunit 1</fullName>
        <ecNumber>2.4.1.83</ecNumber>
    </recommendedName>
    <alternativeName>
        <fullName>Dolichol-phosphate mannose synthase subunit 1</fullName>
        <shortName>DPM synthase subunit 1</shortName>
    </alternativeName>
    <alternativeName>
        <fullName>Dolichyl-phosphate beta-D-mannosyltransferase subunit 1</fullName>
    </alternativeName>
    <alternativeName>
        <fullName>Mannose-P-dolichol synthase subunit 1</fullName>
        <shortName>MPD synthase subunit 1</shortName>
    </alternativeName>
</protein>
<keyword id="KW-0256">Endoplasmic reticulum</keyword>
<keyword id="KW-0328">Glycosyltransferase</keyword>
<keyword id="KW-0460">Magnesium</keyword>
<keyword id="KW-0464">Manganese</keyword>
<keyword id="KW-0479">Metal-binding</keyword>
<keyword id="KW-1185">Reference proteome</keyword>
<keyword id="KW-0808">Transferase</keyword>
<gene>
    <name type="primary">dpm1</name>
    <name type="synonym">dgtB</name>
    <name type="ORF">DDB_G0286519</name>
</gene>
<accession>Q54LP3</accession>
<proteinExistence type="inferred from homology"/>
<evidence type="ECO:0000250" key="1">
    <source>
        <dbReference type="UniProtKB" id="O60762"/>
    </source>
</evidence>
<evidence type="ECO:0000250" key="2">
    <source>
        <dbReference type="UniProtKB" id="Q8U4M3"/>
    </source>
</evidence>
<evidence type="ECO:0000305" key="3"/>
<reference key="1">
    <citation type="journal article" date="2005" name="Nature">
        <title>The genome of the social amoeba Dictyostelium discoideum.</title>
        <authorList>
            <person name="Eichinger L."/>
            <person name="Pachebat J.A."/>
            <person name="Gloeckner G."/>
            <person name="Rajandream M.A."/>
            <person name="Sucgang R."/>
            <person name="Berriman M."/>
            <person name="Song J."/>
            <person name="Olsen R."/>
            <person name="Szafranski K."/>
            <person name="Xu Q."/>
            <person name="Tunggal B."/>
            <person name="Kummerfeld S."/>
            <person name="Madera M."/>
            <person name="Konfortov B.A."/>
            <person name="Rivero F."/>
            <person name="Bankier A.T."/>
            <person name="Lehmann R."/>
            <person name="Hamlin N."/>
            <person name="Davies R."/>
            <person name="Gaudet P."/>
            <person name="Fey P."/>
            <person name="Pilcher K."/>
            <person name="Chen G."/>
            <person name="Saunders D."/>
            <person name="Sodergren E.J."/>
            <person name="Davis P."/>
            <person name="Kerhornou A."/>
            <person name="Nie X."/>
            <person name="Hall N."/>
            <person name="Anjard C."/>
            <person name="Hemphill L."/>
            <person name="Bason N."/>
            <person name="Farbrother P."/>
            <person name="Desany B."/>
            <person name="Just E."/>
            <person name="Morio T."/>
            <person name="Rost R."/>
            <person name="Churcher C.M."/>
            <person name="Cooper J."/>
            <person name="Haydock S."/>
            <person name="van Driessche N."/>
            <person name="Cronin A."/>
            <person name="Goodhead I."/>
            <person name="Muzny D.M."/>
            <person name="Mourier T."/>
            <person name="Pain A."/>
            <person name="Lu M."/>
            <person name="Harper D."/>
            <person name="Lindsay R."/>
            <person name="Hauser H."/>
            <person name="James K.D."/>
            <person name="Quiles M."/>
            <person name="Madan Babu M."/>
            <person name="Saito T."/>
            <person name="Buchrieser C."/>
            <person name="Wardroper A."/>
            <person name="Felder M."/>
            <person name="Thangavelu M."/>
            <person name="Johnson D."/>
            <person name="Knights A."/>
            <person name="Loulseged H."/>
            <person name="Mungall K.L."/>
            <person name="Oliver K."/>
            <person name="Price C."/>
            <person name="Quail M.A."/>
            <person name="Urushihara H."/>
            <person name="Hernandez J."/>
            <person name="Rabbinowitsch E."/>
            <person name="Steffen D."/>
            <person name="Sanders M."/>
            <person name="Ma J."/>
            <person name="Kohara Y."/>
            <person name="Sharp S."/>
            <person name="Simmonds M.N."/>
            <person name="Spiegler S."/>
            <person name="Tivey A."/>
            <person name="Sugano S."/>
            <person name="White B."/>
            <person name="Walker D."/>
            <person name="Woodward J.R."/>
            <person name="Winckler T."/>
            <person name="Tanaka Y."/>
            <person name="Shaulsky G."/>
            <person name="Schleicher M."/>
            <person name="Weinstock G.M."/>
            <person name="Rosenthal A."/>
            <person name="Cox E.C."/>
            <person name="Chisholm R.L."/>
            <person name="Gibbs R.A."/>
            <person name="Loomis W.F."/>
            <person name="Platzer M."/>
            <person name="Kay R.R."/>
            <person name="Williams J.G."/>
            <person name="Dear P.H."/>
            <person name="Noegel A.A."/>
            <person name="Barrell B.G."/>
            <person name="Kuspa A."/>
        </authorList>
    </citation>
    <scope>NUCLEOTIDE SEQUENCE [LARGE SCALE GENOMIC DNA]</scope>
    <source>
        <strain>AX4</strain>
    </source>
</reference>